<feature type="chain" id="PRO_1000060313" description="Fluoride-specific ion channel FluC">
    <location>
        <begin position="1"/>
        <end position="127"/>
    </location>
</feature>
<feature type="transmembrane region" description="Helical" evidence="1">
    <location>
        <begin position="4"/>
        <end position="24"/>
    </location>
</feature>
<feature type="transmembrane region" description="Helical" evidence="1">
    <location>
        <begin position="35"/>
        <end position="55"/>
    </location>
</feature>
<feature type="transmembrane region" description="Helical" evidence="1">
    <location>
        <begin position="71"/>
        <end position="91"/>
    </location>
</feature>
<feature type="transmembrane region" description="Helical" evidence="1">
    <location>
        <begin position="103"/>
        <end position="123"/>
    </location>
</feature>
<feature type="binding site" evidence="1">
    <location>
        <position position="75"/>
    </location>
    <ligand>
        <name>Na(+)</name>
        <dbReference type="ChEBI" id="CHEBI:29101"/>
        <note>structural</note>
    </ligand>
</feature>
<feature type="binding site" evidence="1">
    <location>
        <position position="78"/>
    </location>
    <ligand>
        <name>Na(+)</name>
        <dbReference type="ChEBI" id="CHEBI:29101"/>
        <note>structural</note>
    </ligand>
</feature>
<protein>
    <recommendedName>
        <fullName evidence="1">Fluoride-specific ion channel FluC</fullName>
    </recommendedName>
</protein>
<name>FLUC_ECOHS</name>
<keyword id="KW-0997">Cell inner membrane</keyword>
<keyword id="KW-1003">Cell membrane</keyword>
<keyword id="KW-0407">Ion channel</keyword>
<keyword id="KW-0406">Ion transport</keyword>
<keyword id="KW-0472">Membrane</keyword>
<keyword id="KW-0479">Metal-binding</keyword>
<keyword id="KW-0915">Sodium</keyword>
<keyword id="KW-0812">Transmembrane</keyword>
<keyword id="KW-1133">Transmembrane helix</keyword>
<keyword id="KW-0813">Transport</keyword>
<organism>
    <name type="scientific">Escherichia coli O9:H4 (strain HS)</name>
    <dbReference type="NCBI Taxonomy" id="331112"/>
    <lineage>
        <taxon>Bacteria</taxon>
        <taxon>Pseudomonadati</taxon>
        <taxon>Pseudomonadota</taxon>
        <taxon>Gammaproteobacteria</taxon>
        <taxon>Enterobacterales</taxon>
        <taxon>Enterobacteriaceae</taxon>
        <taxon>Escherichia</taxon>
    </lineage>
</organism>
<comment type="function">
    <text evidence="1">Fluoride-specific ion channel. Important for reducing fluoride concentration in the cell, thus reducing its toxicity.</text>
</comment>
<comment type="catalytic activity">
    <reaction evidence="1">
        <text>fluoride(in) = fluoride(out)</text>
        <dbReference type="Rhea" id="RHEA:76159"/>
        <dbReference type="ChEBI" id="CHEBI:17051"/>
    </reaction>
    <physiologicalReaction direction="left-to-right" evidence="1">
        <dbReference type="Rhea" id="RHEA:76160"/>
    </physiologicalReaction>
</comment>
<comment type="activity regulation">
    <text evidence="1">Na(+) is not transported, but it plays an essential structural role and its presence is essential for fluoride channel function.</text>
</comment>
<comment type="subcellular location">
    <subcellularLocation>
        <location evidence="1">Cell inner membrane</location>
        <topology evidence="1">Multi-pass membrane protein</topology>
    </subcellularLocation>
</comment>
<comment type="similarity">
    <text evidence="1">Belongs to the fluoride channel Fluc/FEX (TC 1.A.43) family.</text>
</comment>
<proteinExistence type="inferred from homology"/>
<evidence type="ECO:0000255" key="1">
    <source>
        <dbReference type="HAMAP-Rule" id="MF_00454"/>
    </source>
</evidence>
<gene>
    <name evidence="1" type="primary">fluC</name>
    <name evidence="1" type="synonym">crcB</name>
    <name type="ordered locus">EcHS_A0676</name>
</gene>
<sequence length="127" mass="13765">MLQLLLAVFIGGGTGSVARWLLSMRFNPLHQAIPLGTLAANLIGAFIIGMGFAWFSRMTNIDPVWKVLITTGFCGGLTTFSTFSAEVVFLLQEGRFGWALLNVFVNLLGSFAMTALAFWLFSASTAH</sequence>
<dbReference type="EMBL" id="CP000802">
    <property type="protein sequence ID" value="ABV05055.1"/>
    <property type="molecule type" value="Genomic_DNA"/>
</dbReference>
<dbReference type="RefSeq" id="WP_000939738.1">
    <property type="nucleotide sequence ID" value="NC_009800.1"/>
</dbReference>
<dbReference type="SMR" id="A7ZXQ1"/>
<dbReference type="GeneID" id="93776858"/>
<dbReference type="KEGG" id="ecx:EcHS_A0676"/>
<dbReference type="HOGENOM" id="CLU_114342_3_3_6"/>
<dbReference type="GO" id="GO:0005886">
    <property type="term" value="C:plasma membrane"/>
    <property type="evidence" value="ECO:0007669"/>
    <property type="project" value="UniProtKB-SubCell"/>
</dbReference>
<dbReference type="GO" id="GO:0062054">
    <property type="term" value="F:fluoride channel activity"/>
    <property type="evidence" value="ECO:0007669"/>
    <property type="project" value="UniProtKB-UniRule"/>
</dbReference>
<dbReference type="GO" id="GO:0046872">
    <property type="term" value="F:metal ion binding"/>
    <property type="evidence" value="ECO:0007669"/>
    <property type="project" value="UniProtKB-KW"/>
</dbReference>
<dbReference type="GO" id="GO:0140114">
    <property type="term" value="P:cellular detoxification of fluoride"/>
    <property type="evidence" value="ECO:0007669"/>
    <property type="project" value="UniProtKB-UniRule"/>
</dbReference>
<dbReference type="HAMAP" id="MF_00454">
    <property type="entry name" value="FluC"/>
    <property type="match status" value="1"/>
</dbReference>
<dbReference type="InterPro" id="IPR003691">
    <property type="entry name" value="FluC"/>
</dbReference>
<dbReference type="NCBIfam" id="TIGR00494">
    <property type="entry name" value="crcB"/>
    <property type="match status" value="1"/>
</dbReference>
<dbReference type="NCBIfam" id="NF010792">
    <property type="entry name" value="PRK14196.1"/>
    <property type="match status" value="1"/>
</dbReference>
<dbReference type="PANTHER" id="PTHR28259">
    <property type="entry name" value="FLUORIDE EXPORT PROTEIN 1-RELATED"/>
    <property type="match status" value="1"/>
</dbReference>
<dbReference type="PANTHER" id="PTHR28259:SF1">
    <property type="entry name" value="FLUORIDE EXPORT PROTEIN 1-RELATED"/>
    <property type="match status" value="1"/>
</dbReference>
<dbReference type="Pfam" id="PF02537">
    <property type="entry name" value="CRCB"/>
    <property type="match status" value="1"/>
</dbReference>
<accession>A7ZXQ1</accession>
<reference key="1">
    <citation type="journal article" date="2008" name="J. Bacteriol.">
        <title>The pangenome structure of Escherichia coli: comparative genomic analysis of E. coli commensal and pathogenic isolates.</title>
        <authorList>
            <person name="Rasko D.A."/>
            <person name="Rosovitz M.J."/>
            <person name="Myers G.S.A."/>
            <person name="Mongodin E.F."/>
            <person name="Fricke W.F."/>
            <person name="Gajer P."/>
            <person name="Crabtree J."/>
            <person name="Sebaihia M."/>
            <person name="Thomson N.R."/>
            <person name="Chaudhuri R."/>
            <person name="Henderson I.R."/>
            <person name="Sperandio V."/>
            <person name="Ravel J."/>
        </authorList>
    </citation>
    <scope>NUCLEOTIDE SEQUENCE [LARGE SCALE GENOMIC DNA]</scope>
    <source>
        <strain>HS</strain>
    </source>
</reference>